<dbReference type="EMBL" id="CP000671">
    <property type="protein sequence ID" value="ABQ98934.1"/>
    <property type="molecule type" value="Genomic_DNA"/>
</dbReference>
<dbReference type="SMR" id="A5UDT3"/>
<dbReference type="KEGG" id="hip:CGSHiEE_08105"/>
<dbReference type="HOGENOM" id="CLU_098428_0_0_6"/>
<dbReference type="GO" id="GO:1990904">
    <property type="term" value="C:ribonucleoprotein complex"/>
    <property type="evidence" value="ECO:0007669"/>
    <property type="project" value="UniProtKB-KW"/>
</dbReference>
<dbReference type="GO" id="GO:0005840">
    <property type="term" value="C:ribosome"/>
    <property type="evidence" value="ECO:0007669"/>
    <property type="project" value="UniProtKB-KW"/>
</dbReference>
<dbReference type="GO" id="GO:0019843">
    <property type="term" value="F:rRNA binding"/>
    <property type="evidence" value="ECO:0007669"/>
    <property type="project" value="UniProtKB-UniRule"/>
</dbReference>
<dbReference type="GO" id="GO:0003735">
    <property type="term" value="F:structural constituent of ribosome"/>
    <property type="evidence" value="ECO:0007669"/>
    <property type="project" value="InterPro"/>
</dbReference>
<dbReference type="GO" id="GO:0006412">
    <property type="term" value="P:translation"/>
    <property type="evidence" value="ECO:0007669"/>
    <property type="project" value="UniProtKB-UniRule"/>
</dbReference>
<dbReference type="FunFam" id="3.30.1370.30:FF:000003">
    <property type="entry name" value="30S ribosomal protein S8"/>
    <property type="match status" value="1"/>
</dbReference>
<dbReference type="FunFam" id="3.30.1490.10:FF:000001">
    <property type="entry name" value="30S ribosomal protein S8"/>
    <property type="match status" value="1"/>
</dbReference>
<dbReference type="Gene3D" id="3.30.1370.30">
    <property type="match status" value="1"/>
</dbReference>
<dbReference type="Gene3D" id="3.30.1490.10">
    <property type="match status" value="1"/>
</dbReference>
<dbReference type="HAMAP" id="MF_01302_B">
    <property type="entry name" value="Ribosomal_uS8_B"/>
    <property type="match status" value="1"/>
</dbReference>
<dbReference type="InterPro" id="IPR000630">
    <property type="entry name" value="Ribosomal_uS8"/>
</dbReference>
<dbReference type="InterPro" id="IPR047863">
    <property type="entry name" value="Ribosomal_uS8_CS"/>
</dbReference>
<dbReference type="InterPro" id="IPR035987">
    <property type="entry name" value="Ribosomal_uS8_sf"/>
</dbReference>
<dbReference type="NCBIfam" id="NF001109">
    <property type="entry name" value="PRK00136.1"/>
    <property type="match status" value="1"/>
</dbReference>
<dbReference type="PANTHER" id="PTHR11758">
    <property type="entry name" value="40S RIBOSOMAL PROTEIN S15A"/>
    <property type="match status" value="1"/>
</dbReference>
<dbReference type="Pfam" id="PF00410">
    <property type="entry name" value="Ribosomal_S8"/>
    <property type="match status" value="1"/>
</dbReference>
<dbReference type="SUPFAM" id="SSF56047">
    <property type="entry name" value="Ribosomal protein S8"/>
    <property type="match status" value="1"/>
</dbReference>
<dbReference type="PROSITE" id="PS00053">
    <property type="entry name" value="RIBOSOMAL_S8"/>
    <property type="match status" value="1"/>
</dbReference>
<name>RS8_HAEIE</name>
<protein>
    <recommendedName>
        <fullName evidence="1">Small ribosomal subunit protein uS8</fullName>
    </recommendedName>
    <alternativeName>
        <fullName evidence="2">30S ribosomal protein S8</fullName>
    </alternativeName>
</protein>
<organism>
    <name type="scientific">Haemophilus influenzae (strain PittEE)</name>
    <dbReference type="NCBI Taxonomy" id="374930"/>
    <lineage>
        <taxon>Bacteria</taxon>
        <taxon>Pseudomonadati</taxon>
        <taxon>Pseudomonadota</taxon>
        <taxon>Gammaproteobacteria</taxon>
        <taxon>Pasteurellales</taxon>
        <taxon>Pasteurellaceae</taxon>
        <taxon>Haemophilus</taxon>
    </lineage>
</organism>
<proteinExistence type="inferred from homology"/>
<evidence type="ECO:0000255" key="1">
    <source>
        <dbReference type="HAMAP-Rule" id="MF_01302"/>
    </source>
</evidence>
<evidence type="ECO:0000305" key="2"/>
<feature type="chain" id="PRO_0000305745" description="Small ribosomal subunit protein uS8">
    <location>
        <begin position="1"/>
        <end position="130"/>
    </location>
</feature>
<comment type="function">
    <text evidence="1">One of the primary rRNA binding proteins, it binds directly to 16S rRNA central domain where it helps coordinate assembly of the platform of the 30S subunit.</text>
</comment>
<comment type="subunit">
    <text evidence="1">Part of the 30S ribosomal subunit. Contacts proteins S5 and S12.</text>
</comment>
<comment type="similarity">
    <text evidence="1">Belongs to the universal ribosomal protein uS8 family.</text>
</comment>
<sequence length="130" mass="13986">MSMQDPIADMLTRIRNGQAANKVAINMPSSKLKVAIANVLAAEGYIESVKVLEGAKPELEITLKYFQGKPVVESIQRVSRPGLRIYKRKDELPKVMGGLGVAVISTSKGVMTDRAARQAGLGGEIICYVA</sequence>
<reference key="1">
    <citation type="journal article" date="2007" name="Genome Biol.">
        <title>Characterization and modeling of the Haemophilus influenzae core and supragenomes based on the complete genomic sequences of Rd and 12 clinical nontypeable strains.</title>
        <authorList>
            <person name="Hogg J.S."/>
            <person name="Hu F.Z."/>
            <person name="Janto B."/>
            <person name="Boissy R."/>
            <person name="Hayes J."/>
            <person name="Keefe R."/>
            <person name="Post J.C."/>
            <person name="Ehrlich G.D."/>
        </authorList>
    </citation>
    <scope>NUCLEOTIDE SEQUENCE [LARGE SCALE GENOMIC DNA]</scope>
    <source>
        <strain>PittEE</strain>
    </source>
</reference>
<accession>A5UDT3</accession>
<keyword id="KW-0687">Ribonucleoprotein</keyword>
<keyword id="KW-0689">Ribosomal protein</keyword>
<keyword id="KW-0694">RNA-binding</keyword>
<keyword id="KW-0699">rRNA-binding</keyword>
<gene>
    <name evidence="1" type="primary">rpsH</name>
    <name type="ordered locus">CGSHiEE_08105</name>
</gene>